<name>SRP54_MOUSE</name>
<reference key="1">
    <citation type="journal article" date="1989" name="Nature">
        <title>Model for signal sequence recognition from amino-acid sequence of 54K subunit of signal recognition particle.</title>
        <authorList>
            <person name="Bernstein H.D."/>
            <person name="Poritz M.A."/>
            <person name="Strub K."/>
            <person name="Hoben P.J."/>
            <person name="Brenner S."/>
            <person name="Walter P."/>
        </authorList>
    </citation>
    <scope>NUCLEOTIDE SEQUENCE [MRNA] (ISOFORM 1)</scope>
    <scope>PARTIAL PROTEIN SEQUENCE</scope>
</reference>
<reference key="2">
    <citation type="journal article" date="2005" name="Science">
        <title>The transcriptional landscape of the mammalian genome.</title>
        <authorList>
            <person name="Carninci P."/>
            <person name="Kasukawa T."/>
            <person name="Katayama S."/>
            <person name="Gough J."/>
            <person name="Frith M.C."/>
            <person name="Maeda N."/>
            <person name="Oyama R."/>
            <person name="Ravasi T."/>
            <person name="Lenhard B."/>
            <person name="Wells C."/>
            <person name="Kodzius R."/>
            <person name="Shimokawa K."/>
            <person name="Bajic V.B."/>
            <person name="Brenner S.E."/>
            <person name="Batalov S."/>
            <person name="Forrest A.R."/>
            <person name="Zavolan M."/>
            <person name="Davis M.J."/>
            <person name="Wilming L.G."/>
            <person name="Aidinis V."/>
            <person name="Allen J.E."/>
            <person name="Ambesi-Impiombato A."/>
            <person name="Apweiler R."/>
            <person name="Aturaliya R.N."/>
            <person name="Bailey T.L."/>
            <person name="Bansal M."/>
            <person name="Baxter L."/>
            <person name="Beisel K.W."/>
            <person name="Bersano T."/>
            <person name="Bono H."/>
            <person name="Chalk A.M."/>
            <person name="Chiu K.P."/>
            <person name="Choudhary V."/>
            <person name="Christoffels A."/>
            <person name="Clutterbuck D.R."/>
            <person name="Crowe M.L."/>
            <person name="Dalla E."/>
            <person name="Dalrymple B.P."/>
            <person name="de Bono B."/>
            <person name="Della Gatta G."/>
            <person name="di Bernardo D."/>
            <person name="Down T."/>
            <person name="Engstrom P."/>
            <person name="Fagiolini M."/>
            <person name="Faulkner G."/>
            <person name="Fletcher C.F."/>
            <person name="Fukushima T."/>
            <person name="Furuno M."/>
            <person name="Futaki S."/>
            <person name="Gariboldi M."/>
            <person name="Georgii-Hemming P."/>
            <person name="Gingeras T.R."/>
            <person name="Gojobori T."/>
            <person name="Green R.E."/>
            <person name="Gustincich S."/>
            <person name="Harbers M."/>
            <person name="Hayashi Y."/>
            <person name="Hensch T.K."/>
            <person name="Hirokawa N."/>
            <person name="Hill D."/>
            <person name="Huminiecki L."/>
            <person name="Iacono M."/>
            <person name="Ikeo K."/>
            <person name="Iwama A."/>
            <person name="Ishikawa T."/>
            <person name="Jakt M."/>
            <person name="Kanapin A."/>
            <person name="Katoh M."/>
            <person name="Kawasawa Y."/>
            <person name="Kelso J."/>
            <person name="Kitamura H."/>
            <person name="Kitano H."/>
            <person name="Kollias G."/>
            <person name="Krishnan S.P."/>
            <person name="Kruger A."/>
            <person name="Kummerfeld S.K."/>
            <person name="Kurochkin I.V."/>
            <person name="Lareau L.F."/>
            <person name="Lazarevic D."/>
            <person name="Lipovich L."/>
            <person name="Liu J."/>
            <person name="Liuni S."/>
            <person name="McWilliam S."/>
            <person name="Madan Babu M."/>
            <person name="Madera M."/>
            <person name="Marchionni L."/>
            <person name="Matsuda H."/>
            <person name="Matsuzawa S."/>
            <person name="Miki H."/>
            <person name="Mignone F."/>
            <person name="Miyake S."/>
            <person name="Morris K."/>
            <person name="Mottagui-Tabar S."/>
            <person name="Mulder N."/>
            <person name="Nakano N."/>
            <person name="Nakauchi H."/>
            <person name="Ng P."/>
            <person name="Nilsson R."/>
            <person name="Nishiguchi S."/>
            <person name="Nishikawa S."/>
            <person name="Nori F."/>
            <person name="Ohara O."/>
            <person name="Okazaki Y."/>
            <person name="Orlando V."/>
            <person name="Pang K.C."/>
            <person name="Pavan W.J."/>
            <person name="Pavesi G."/>
            <person name="Pesole G."/>
            <person name="Petrovsky N."/>
            <person name="Piazza S."/>
            <person name="Reed J."/>
            <person name="Reid J.F."/>
            <person name="Ring B.Z."/>
            <person name="Ringwald M."/>
            <person name="Rost B."/>
            <person name="Ruan Y."/>
            <person name="Salzberg S.L."/>
            <person name="Sandelin A."/>
            <person name="Schneider C."/>
            <person name="Schoenbach C."/>
            <person name="Sekiguchi K."/>
            <person name="Semple C.A."/>
            <person name="Seno S."/>
            <person name="Sessa L."/>
            <person name="Sheng Y."/>
            <person name="Shibata Y."/>
            <person name="Shimada H."/>
            <person name="Shimada K."/>
            <person name="Silva D."/>
            <person name="Sinclair B."/>
            <person name="Sperling S."/>
            <person name="Stupka E."/>
            <person name="Sugiura K."/>
            <person name="Sultana R."/>
            <person name="Takenaka Y."/>
            <person name="Taki K."/>
            <person name="Tammoja K."/>
            <person name="Tan S.L."/>
            <person name="Tang S."/>
            <person name="Taylor M.S."/>
            <person name="Tegner J."/>
            <person name="Teichmann S.A."/>
            <person name="Ueda H.R."/>
            <person name="van Nimwegen E."/>
            <person name="Verardo R."/>
            <person name="Wei C.L."/>
            <person name="Yagi K."/>
            <person name="Yamanishi H."/>
            <person name="Zabarovsky E."/>
            <person name="Zhu S."/>
            <person name="Zimmer A."/>
            <person name="Hide W."/>
            <person name="Bult C."/>
            <person name="Grimmond S.M."/>
            <person name="Teasdale R.D."/>
            <person name="Liu E.T."/>
            <person name="Brusic V."/>
            <person name="Quackenbush J."/>
            <person name="Wahlestedt C."/>
            <person name="Mattick J.S."/>
            <person name="Hume D.A."/>
            <person name="Kai C."/>
            <person name="Sasaki D."/>
            <person name="Tomaru Y."/>
            <person name="Fukuda S."/>
            <person name="Kanamori-Katayama M."/>
            <person name="Suzuki M."/>
            <person name="Aoki J."/>
            <person name="Arakawa T."/>
            <person name="Iida J."/>
            <person name="Imamura K."/>
            <person name="Itoh M."/>
            <person name="Kato T."/>
            <person name="Kawaji H."/>
            <person name="Kawagashira N."/>
            <person name="Kawashima T."/>
            <person name="Kojima M."/>
            <person name="Kondo S."/>
            <person name="Konno H."/>
            <person name="Nakano K."/>
            <person name="Ninomiya N."/>
            <person name="Nishio T."/>
            <person name="Okada M."/>
            <person name="Plessy C."/>
            <person name="Shibata K."/>
            <person name="Shiraki T."/>
            <person name="Suzuki S."/>
            <person name="Tagami M."/>
            <person name="Waki K."/>
            <person name="Watahiki A."/>
            <person name="Okamura-Oho Y."/>
            <person name="Suzuki H."/>
            <person name="Kawai J."/>
            <person name="Hayashizaki Y."/>
        </authorList>
    </citation>
    <scope>NUCLEOTIDE SEQUENCE [LARGE SCALE MRNA] (ISOFORMS 1 AND 2)</scope>
    <source>
        <strain>C57BL/6J</strain>
        <tissue>Egg</tissue>
        <tissue>Embryo</tissue>
        <tissue>Embryonic stem cell</tissue>
    </source>
</reference>
<reference key="3">
    <citation type="journal article" date="2004" name="Genome Res.">
        <title>The status, quality, and expansion of the NIH full-length cDNA project: the Mammalian Gene Collection (MGC).</title>
        <authorList>
            <consortium name="The MGC Project Team"/>
        </authorList>
    </citation>
    <scope>NUCLEOTIDE SEQUENCE [LARGE SCALE MRNA] (ISOFORM 1)</scope>
    <source>
        <strain>FVB/N</strain>
        <tissue>Mammary tumor</tissue>
    </source>
</reference>
<reference key="4">
    <citation type="journal article" date="1990" name="EMBO J.">
        <title>The methionine-rich domain of the 54 kd protein subunit of the signal recognition particle contains an RNA binding site and can be crosslinked to a signal sequence.</title>
        <authorList>
            <person name="Zopf D."/>
            <person name="Bernstein H.D."/>
            <person name="Johnson A.E."/>
            <person name="Walter P."/>
        </authorList>
    </citation>
    <scope>M-DOMAIN RNA-BINDING</scope>
</reference>
<reference key="5">
    <citation type="journal article" date="2010" name="Cell">
        <title>A tissue-specific atlas of mouse protein phosphorylation and expression.</title>
        <authorList>
            <person name="Huttlin E.L."/>
            <person name="Jedrychowski M.P."/>
            <person name="Elias J.E."/>
            <person name="Goswami T."/>
            <person name="Rad R."/>
            <person name="Beausoleil S.A."/>
            <person name="Villen J."/>
            <person name="Haas W."/>
            <person name="Sowa M.E."/>
            <person name="Gygi S.P."/>
        </authorList>
    </citation>
    <scope>IDENTIFICATION BY MASS SPECTROMETRY [LARGE SCALE ANALYSIS]</scope>
    <source>
        <tissue>Liver</tissue>
        <tissue>Pancreas</tissue>
        <tissue>Spleen</tissue>
        <tissue>Testis</tissue>
    </source>
</reference>
<reference key="6">
    <citation type="journal article" date="2004" name="Nature">
        <title>Structure of the signal recognition particle interacting with the elongation-arrested ribosome.</title>
        <authorList>
            <person name="Halic M."/>
            <person name="Becker T."/>
            <person name="Pool M.R."/>
            <person name="Spahn C.M.T."/>
            <person name="Grassucci R.A."/>
            <person name="Frank J."/>
            <person name="Beckmann R."/>
        </authorList>
    </citation>
    <scope>STRUCTURE BY ELECTRON MICROSCOPY (12.0 ANGSTROMS) OF 326-434 IN COMPLEX WITH 80S RIBOSOME</scope>
</reference>
<reference key="7">
    <citation type="submission" date="2004-11" db="PDB data bank">
        <title>Solution structure of the N-terminal domain of mouse putative signal recoginition particle 54 (SRP54).</title>
        <authorList>
            <consortium name="RIKEN structural genomics initiative (RSGI)"/>
        </authorList>
    </citation>
    <scope>STRUCTURE BY NMR OF 4-89</scope>
</reference>
<proteinExistence type="evidence at protein level"/>
<feature type="chain" id="PRO_0000101194" description="Signal recognition particle subunit SRP54">
    <location>
        <begin position="1"/>
        <end position="504"/>
    </location>
</feature>
<feature type="region of interest" description="NG-domain" evidence="3">
    <location>
        <begin position="1"/>
        <end position="295"/>
    </location>
</feature>
<feature type="region of interest" description="M-domain" evidence="3">
    <location>
        <begin position="296"/>
        <end position="504"/>
    </location>
</feature>
<feature type="binding site" evidence="1">
    <location>
        <begin position="108"/>
        <end position="115"/>
    </location>
    <ligand>
        <name>GTP</name>
        <dbReference type="ChEBI" id="CHEBI:37565"/>
    </ligand>
</feature>
<feature type="binding site" evidence="1">
    <location>
        <begin position="190"/>
        <end position="194"/>
    </location>
    <ligand>
        <name>GTP</name>
        <dbReference type="ChEBI" id="CHEBI:37565"/>
    </ligand>
</feature>
<feature type="binding site" evidence="1">
    <location>
        <begin position="248"/>
        <end position="251"/>
    </location>
    <ligand>
        <name>GTP</name>
        <dbReference type="ChEBI" id="CHEBI:37565"/>
    </ligand>
</feature>
<feature type="splice variant" id="VSP_014953" description="In isoform 2." evidence="4">
    <original>LVDPGVKAWTPTKGKQNV</original>
    <variation>VKVYQHYESINSVLLSPF</variation>
    <location>
        <begin position="86"/>
        <end position="103"/>
    </location>
</feature>
<feature type="splice variant" id="VSP_014954" description="In isoform 2." evidence="4">
    <location>
        <begin position="104"/>
        <end position="504"/>
    </location>
</feature>
<feature type="sequence conflict" description="In Ref. 1; CAA34386." evidence="5" ref="1">
    <original>M</original>
    <variation>R</variation>
    <location>
        <position position="205"/>
    </location>
</feature>
<feature type="helix" evidence="6">
    <location>
        <begin position="5"/>
        <end position="19"/>
    </location>
</feature>
<feature type="helix" evidence="6">
    <location>
        <begin position="25"/>
        <end position="40"/>
    </location>
</feature>
<feature type="helix" evidence="6">
    <location>
        <begin position="46"/>
        <end position="57"/>
    </location>
</feature>
<feature type="helix" evidence="6">
    <location>
        <begin position="69"/>
        <end position="85"/>
    </location>
</feature>
<comment type="function">
    <text evidence="2 3">Component of the signal recognition particle (SRP) complex, a ribonucleoprotein complex that mediates the cotranslational targeting of secretory and membrane proteins to the endoplasmic reticulum (ER) (By similarity). As part of the SRP complex, associates with the SRP receptor (SR) component SRPRA to target secretory proteins to the endoplasmic reticulum membrane (By similarity). Binds to the signal sequence of presecretory proteins when they emerge from the ribosomes (By similarity). Displays basal GTPase activity, and stimulates reciprocal GTPase activation of the SR subunit SRPRA (By similarity). Forms a guanosine 5'-triphosphate (GTP)-dependent complex with the SR subunit SRPRA (By similarity). SR compaction and GTPase mediated rearrangement of SR drive SRP-mediated cotranslational protein translocation into the ER (By similarity). Requires the presence of SRP9/SRP14 and/or SRP19 to stably interact with RNA (By similarity). Plays a role in proliferation and differentiation of granulocytic cells, neutrophils migration capacity and exocrine pancreas development (By similarity).</text>
</comment>
<comment type="catalytic activity">
    <reaction evidence="3">
        <text>GTP + H2O = GDP + phosphate + H(+)</text>
        <dbReference type="Rhea" id="RHEA:19669"/>
        <dbReference type="ChEBI" id="CHEBI:15377"/>
        <dbReference type="ChEBI" id="CHEBI:15378"/>
        <dbReference type="ChEBI" id="CHEBI:37565"/>
        <dbReference type="ChEBI" id="CHEBI:43474"/>
        <dbReference type="ChEBI" id="CHEBI:58189"/>
        <dbReference type="EC" id="3.6.5.4"/>
    </reaction>
    <physiologicalReaction direction="left-to-right" evidence="3">
        <dbReference type="Rhea" id="RHEA:19670"/>
    </physiologicalReaction>
</comment>
<comment type="subunit">
    <text evidence="3">Component of a signal recognition particle (SRP) complex that consists of a 7SL RNA molecule of 300 nucleotides and six protein subunits: SRP72, SRP68, SRP54, SRP19, SRP14 and SRP9 (By similarity). Interacts with RNPS1 (By similarity). Interacts with the SRP receptor subunit SRPRA (By similarity).</text>
</comment>
<comment type="subcellular location">
    <subcellularLocation>
        <location evidence="3">Nucleus speckle</location>
    </subcellularLocation>
    <subcellularLocation>
        <location evidence="3">Cytoplasm</location>
    </subcellularLocation>
    <subcellularLocation>
        <location evidence="3">Endoplasmic reticulum</location>
    </subcellularLocation>
</comment>
<comment type="alternative products">
    <event type="alternative splicing"/>
    <isoform>
        <id>P14576-1</id>
        <name>1</name>
        <sequence type="displayed"/>
    </isoform>
    <isoform>
        <id>P14576-2</id>
        <name>2</name>
        <sequence type="described" ref="VSP_014953 VSP_014954"/>
    </isoform>
</comment>
<comment type="domain">
    <text evidence="3">The NG domain, also named G domain, is a special guanosine triphosphatase (GTPase) domain, which binds GTP and forms a guanosine 5'-triphosphate (GTP)-dependent complex with a homologous NG domain in the SRP receptor subunit SRPRA (By similarity). The two NG domains undergo cooperative rearrangements upon their assembly, which culminate in the reciprocal activation of the GTPase activity of one another (By similarity). SRP receptor compaction upon binding with cargo-loaded SRP and GTPase rearrangement drive SRP-mediated cotranslational protein translocation into the ER (By similarity).</text>
</comment>
<comment type="domain">
    <text evidence="3">The M domain binds the 7SL RNA in presence of SRP19 and binds the signal sequence of presecretory proteins.</text>
</comment>
<comment type="similarity">
    <text evidence="5">Belongs to the GTP-binding SRP family. SRP54 subfamily.</text>
</comment>
<protein>
    <recommendedName>
        <fullName>Signal recognition particle subunit SRP54</fullName>
        <ecNumber evidence="3">3.6.5.4</ecNumber>
    </recommendedName>
    <alternativeName>
        <fullName>Signal recognition particle 54 kDa protein</fullName>
    </alternativeName>
</protein>
<keyword id="KW-0002">3D-structure</keyword>
<keyword id="KW-0025">Alternative splicing</keyword>
<keyword id="KW-0963">Cytoplasm</keyword>
<keyword id="KW-0903">Direct protein sequencing</keyword>
<keyword id="KW-0256">Endoplasmic reticulum</keyword>
<keyword id="KW-0342">GTP-binding</keyword>
<keyword id="KW-0378">Hydrolase</keyword>
<keyword id="KW-0547">Nucleotide-binding</keyword>
<keyword id="KW-0539">Nucleus</keyword>
<keyword id="KW-1185">Reference proteome</keyword>
<keyword id="KW-0687">Ribonucleoprotein</keyword>
<keyword id="KW-0694">RNA-binding</keyword>
<keyword id="KW-0733">Signal recognition particle</keyword>
<evidence type="ECO:0000250" key="1"/>
<evidence type="ECO:0000250" key="2">
    <source>
        <dbReference type="UniProtKB" id="P61010"/>
    </source>
</evidence>
<evidence type="ECO:0000250" key="3">
    <source>
        <dbReference type="UniProtKB" id="P61011"/>
    </source>
</evidence>
<evidence type="ECO:0000303" key="4">
    <source>
    </source>
</evidence>
<evidence type="ECO:0000305" key="5"/>
<evidence type="ECO:0007829" key="6">
    <source>
        <dbReference type="PDB" id="1WGW"/>
    </source>
</evidence>
<dbReference type="EC" id="3.6.5.4" evidence="3"/>
<dbReference type="EMBL" id="X16319">
    <property type="protein sequence ID" value="CAA34386.1"/>
    <property type="molecule type" value="mRNA"/>
</dbReference>
<dbReference type="EMBL" id="AK010716">
    <property type="protein sequence ID" value="BAB27138.1"/>
    <property type="molecule type" value="mRNA"/>
</dbReference>
<dbReference type="EMBL" id="AK011928">
    <property type="protein sequence ID" value="BAB27921.1"/>
    <property type="molecule type" value="mRNA"/>
</dbReference>
<dbReference type="EMBL" id="AK136033">
    <property type="protein sequence ID" value="BAE22786.1"/>
    <property type="molecule type" value="mRNA"/>
</dbReference>
<dbReference type="EMBL" id="BC019683">
    <property type="protein sequence ID" value="AAH19683.1"/>
    <property type="molecule type" value="mRNA"/>
</dbReference>
<dbReference type="CCDS" id="CCDS36449.1">
    <molecule id="P14576-1"/>
</dbReference>
<dbReference type="CCDS" id="CCDS49065.1">
    <molecule id="P14576-1"/>
</dbReference>
<dbReference type="PIR" id="S05198">
    <property type="entry name" value="S05198"/>
</dbReference>
<dbReference type="RefSeq" id="NP_001093579.1">
    <molecule id="P14576-1"/>
    <property type="nucleotide sequence ID" value="NM_001100109.1"/>
</dbReference>
<dbReference type="RefSeq" id="NP_036029.2">
    <molecule id="P14576-1"/>
    <property type="nucleotide sequence ID" value="NM_011899.4"/>
</dbReference>
<dbReference type="PDB" id="1RY1">
    <property type="method" value="EM"/>
    <property type="resolution" value="12.00 A"/>
    <property type="chains" value="W=326-434"/>
</dbReference>
<dbReference type="PDB" id="1WGW">
    <property type="method" value="NMR"/>
    <property type="chains" value="A=4-85"/>
</dbReference>
<dbReference type="PDBsum" id="1RY1"/>
<dbReference type="PDBsum" id="1WGW"/>
<dbReference type="SMR" id="P14576"/>
<dbReference type="BioGRID" id="204879">
    <property type="interactions" value="7"/>
</dbReference>
<dbReference type="FunCoup" id="P14576">
    <property type="interactions" value="3488"/>
</dbReference>
<dbReference type="IntAct" id="P14576">
    <property type="interactions" value="2"/>
</dbReference>
<dbReference type="MINT" id="P14576"/>
<dbReference type="STRING" id="10090.ENSMUSP00000106336"/>
<dbReference type="GlyGen" id="P14576">
    <property type="glycosylation" value="1 site, 1 O-linked glycan (1 site)"/>
</dbReference>
<dbReference type="iPTMnet" id="P14576"/>
<dbReference type="PhosphoSitePlus" id="P14576"/>
<dbReference type="SwissPalm" id="P14576"/>
<dbReference type="jPOST" id="P14576"/>
<dbReference type="PaxDb" id="10090-ENSMUSP00000021407"/>
<dbReference type="PeptideAtlas" id="P14576"/>
<dbReference type="ProteomicsDB" id="257070">
    <molecule id="P14576-1"/>
</dbReference>
<dbReference type="ProteomicsDB" id="257071">
    <molecule id="P14576-2"/>
</dbReference>
<dbReference type="Pumba" id="P14576"/>
<dbReference type="DNASU" id="24067"/>
<dbReference type="Ensembl" id="ENSMUST00000021407.11">
    <molecule id="P14576-1"/>
    <property type="protein sequence ID" value="ENSMUSP00000021407.11"/>
    <property type="gene ID" value="ENSMUSG00000073079.7"/>
</dbReference>
<dbReference type="Ensembl" id="ENSMUST00000110708.4">
    <molecule id="P14576-1"/>
    <property type="protein sequence ID" value="ENSMUSP00000106336.3"/>
    <property type="gene ID" value="ENSMUSG00000112449.2"/>
</dbReference>
<dbReference type="Ensembl" id="ENSMUST00000220578.2">
    <molecule id="P14576-1"/>
    <property type="protein sequence ID" value="ENSMUSP00000152764.2"/>
    <property type="gene ID" value="ENSMUSG00000073079.7"/>
</dbReference>
<dbReference type="GeneID" id="24067"/>
<dbReference type="KEGG" id="mmu:24067"/>
<dbReference type="KEGG" id="mmu:665155"/>
<dbReference type="UCSC" id="uc007nof.1">
    <molecule id="P14576-1"/>
    <property type="organism name" value="mouse"/>
</dbReference>
<dbReference type="AGR" id="MGI:1346087"/>
<dbReference type="CTD" id="24067"/>
<dbReference type="CTD" id="665155"/>
<dbReference type="MGI" id="MGI:1346087">
    <property type="gene designation" value="Srp54"/>
</dbReference>
<dbReference type="VEuPathDB" id="HostDB:ENSMUSG00000073079"/>
<dbReference type="VEuPathDB" id="HostDB:ENSMUSG00000112449"/>
<dbReference type="eggNOG" id="KOG0780">
    <property type="taxonomic scope" value="Eukaryota"/>
</dbReference>
<dbReference type="GeneTree" id="ENSGT00550000074824"/>
<dbReference type="HOGENOM" id="CLU_009301_6_1_1"/>
<dbReference type="InParanoid" id="P14576"/>
<dbReference type="OMA" id="GMTGQDA"/>
<dbReference type="OrthoDB" id="10250817at2759"/>
<dbReference type="PhylomeDB" id="P14576"/>
<dbReference type="TreeFam" id="TF106249"/>
<dbReference type="Reactome" id="R-MMU-1799339">
    <property type="pathway name" value="SRP-dependent cotranslational protein targeting to membrane"/>
</dbReference>
<dbReference type="BioGRID-ORCS" id="24067">
    <property type="hits" value="9 hits in 40 CRISPR screens"/>
</dbReference>
<dbReference type="BioGRID-ORCS" id="665155">
    <property type="hits" value="8 hits in 37 CRISPR screens"/>
</dbReference>
<dbReference type="ChiTaRS" id="Srp54a">
    <property type="organism name" value="mouse"/>
</dbReference>
<dbReference type="EvolutionaryTrace" id="P14576"/>
<dbReference type="PRO" id="PR:P14576"/>
<dbReference type="Proteomes" id="UP000000589">
    <property type="component" value="Chromosome 12"/>
</dbReference>
<dbReference type="RNAct" id="P14576">
    <property type="molecule type" value="protein"/>
</dbReference>
<dbReference type="Bgee" id="ENSMUSG00000073079">
    <property type="expression patterns" value="Expressed in retinal neural layer and 101 other cell types or tissues"/>
</dbReference>
<dbReference type="ExpressionAtlas" id="P14576">
    <property type="expression patterns" value="baseline and differential"/>
</dbReference>
<dbReference type="GO" id="GO:0005737">
    <property type="term" value="C:cytoplasm"/>
    <property type="evidence" value="ECO:0000266"/>
    <property type="project" value="MGI"/>
</dbReference>
<dbReference type="GO" id="GO:0005783">
    <property type="term" value="C:endoplasmic reticulum"/>
    <property type="evidence" value="ECO:0007669"/>
    <property type="project" value="UniProtKB-SubCell"/>
</dbReference>
<dbReference type="GO" id="GO:0016607">
    <property type="term" value="C:nuclear speck"/>
    <property type="evidence" value="ECO:0007669"/>
    <property type="project" value="UniProtKB-SubCell"/>
</dbReference>
<dbReference type="GO" id="GO:0005786">
    <property type="term" value="C:signal recognition particle, endoplasmic reticulum targeting"/>
    <property type="evidence" value="ECO:0007669"/>
    <property type="project" value="UniProtKB-KW"/>
</dbReference>
<dbReference type="GO" id="GO:0008312">
    <property type="term" value="F:7S RNA binding"/>
    <property type="evidence" value="ECO:0000266"/>
    <property type="project" value="MGI"/>
</dbReference>
<dbReference type="GO" id="GO:0016887">
    <property type="term" value="F:ATP hydrolysis activity"/>
    <property type="evidence" value="ECO:0007669"/>
    <property type="project" value="InterPro"/>
</dbReference>
<dbReference type="GO" id="GO:0005525">
    <property type="term" value="F:GTP binding"/>
    <property type="evidence" value="ECO:0007669"/>
    <property type="project" value="UniProtKB-KW"/>
</dbReference>
<dbReference type="GO" id="GO:0003924">
    <property type="term" value="F:GTPase activity"/>
    <property type="evidence" value="ECO:0000250"/>
    <property type="project" value="UniProtKB"/>
</dbReference>
<dbReference type="GO" id="GO:0043021">
    <property type="term" value="F:ribonucleoprotein complex binding"/>
    <property type="evidence" value="ECO:0000266"/>
    <property type="project" value="MGI"/>
</dbReference>
<dbReference type="GO" id="GO:0031017">
    <property type="term" value="P:exocrine pancreas development"/>
    <property type="evidence" value="ECO:0000250"/>
    <property type="project" value="UniProtKB"/>
</dbReference>
<dbReference type="GO" id="GO:0030851">
    <property type="term" value="P:granulocyte differentiation"/>
    <property type="evidence" value="ECO:0000250"/>
    <property type="project" value="UniProtKB"/>
</dbReference>
<dbReference type="GO" id="GO:0030593">
    <property type="term" value="P:neutrophil chemotaxis"/>
    <property type="evidence" value="ECO:0000250"/>
    <property type="project" value="UniProtKB"/>
</dbReference>
<dbReference type="GO" id="GO:0006614">
    <property type="term" value="P:SRP-dependent cotranslational protein targeting to membrane"/>
    <property type="evidence" value="ECO:0000266"/>
    <property type="project" value="MGI"/>
</dbReference>
<dbReference type="CDD" id="cd17875">
    <property type="entry name" value="SRP54_G"/>
    <property type="match status" value="1"/>
</dbReference>
<dbReference type="FunFam" id="1.10.260.30:FF:000002">
    <property type="entry name" value="Signal recognition particle 54 kDa protein"/>
    <property type="match status" value="1"/>
</dbReference>
<dbReference type="FunFam" id="1.20.120.140:FF:000003">
    <property type="entry name" value="Signal recognition particle 54 kDa protein"/>
    <property type="match status" value="1"/>
</dbReference>
<dbReference type="FunFam" id="3.40.50.300:FF:000022">
    <property type="entry name" value="Signal recognition particle 54 kDa subunit"/>
    <property type="match status" value="1"/>
</dbReference>
<dbReference type="Gene3D" id="3.40.50.300">
    <property type="entry name" value="P-loop containing nucleotide triphosphate hydrolases"/>
    <property type="match status" value="1"/>
</dbReference>
<dbReference type="Gene3D" id="1.20.120.140">
    <property type="entry name" value="Signal recognition particle SRP54, nucleotide-binding domain"/>
    <property type="match status" value="1"/>
</dbReference>
<dbReference type="Gene3D" id="1.10.260.30">
    <property type="entry name" value="Signal recognition particle, SRP54 subunit, M-domain"/>
    <property type="match status" value="1"/>
</dbReference>
<dbReference type="HAMAP" id="MF_00306">
    <property type="entry name" value="SRP54"/>
    <property type="match status" value="1"/>
</dbReference>
<dbReference type="InterPro" id="IPR003593">
    <property type="entry name" value="AAA+_ATPase"/>
</dbReference>
<dbReference type="InterPro" id="IPR027417">
    <property type="entry name" value="P-loop_NTPase"/>
</dbReference>
<dbReference type="InterPro" id="IPR036891">
    <property type="entry name" value="Signal_recog_part_SRP54_M_sf"/>
</dbReference>
<dbReference type="InterPro" id="IPR013822">
    <property type="entry name" value="Signal_recog_particl_SRP54_hlx"/>
</dbReference>
<dbReference type="InterPro" id="IPR004125">
    <property type="entry name" value="Signal_recog_particle_SRP54_M"/>
</dbReference>
<dbReference type="InterPro" id="IPR022941">
    <property type="entry name" value="SRP54"/>
</dbReference>
<dbReference type="InterPro" id="IPR006325">
    <property type="entry name" value="SRP54_euk"/>
</dbReference>
<dbReference type="InterPro" id="IPR000897">
    <property type="entry name" value="SRP54_GTPase_dom"/>
</dbReference>
<dbReference type="InterPro" id="IPR042101">
    <property type="entry name" value="SRP54_N_sf"/>
</dbReference>
<dbReference type="NCBIfam" id="TIGR01425">
    <property type="entry name" value="SRP54_euk"/>
    <property type="match status" value="1"/>
</dbReference>
<dbReference type="PANTHER" id="PTHR11564">
    <property type="entry name" value="SIGNAL RECOGNITION PARTICLE 54K PROTEIN SRP54"/>
    <property type="match status" value="1"/>
</dbReference>
<dbReference type="PANTHER" id="PTHR11564:SF5">
    <property type="entry name" value="SIGNAL RECOGNITION PARTICLE SUBUNIT SRP54"/>
    <property type="match status" value="1"/>
</dbReference>
<dbReference type="Pfam" id="PF00448">
    <property type="entry name" value="SRP54"/>
    <property type="match status" value="1"/>
</dbReference>
<dbReference type="Pfam" id="PF02881">
    <property type="entry name" value="SRP54_N"/>
    <property type="match status" value="1"/>
</dbReference>
<dbReference type="Pfam" id="PF02978">
    <property type="entry name" value="SRP_SPB"/>
    <property type="match status" value="1"/>
</dbReference>
<dbReference type="SMART" id="SM00382">
    <property type="entry name" value="AAA"/>
    <property type="match status" value="1"/>
</dbReference>
<dbReference type="SMART" id="SM00962">
    <property type="entry name" value="SRP54"/>
    <property type="match status" value="1"/>
</dbReference>
<dbReference type="SMART" id="SM00963">
    <property type="entry name" value="SRP54_N"/>
    <property type="match status" value="1"/>
</dbReference>
<dbReference type="SUPFAM" id="SSF52540">
    <property type="entry name" value="P-loop containing nucleoside triphosphate hydrolases"/>
    <property type="match status" value="1"/>
</dbReference>
<dbReference type="SUPFAM" id="SSF47446">
    <property type="entry name" value="Signal peptide-binding domain"/>
    <property type="match status" value="1"/>
</dbReference>
<dbReference type="PROSITE" id="PS00300">
    <property type="entry name" value="SRP54"/>
    <property type="match status" value="1"/>
</dbReference>
<sequence length="504" mass="55721">MVLADLGRKITSALRSLSNATIINEEVLNAMLKEVCTALLEADVNIKLVKQLRENVKSAIDLEEMASGLNKRKMIQHAVFKELVKLVDPGVKAWTPTKGKQNVIMFVGLQGSGKTTTCSKLAYYYQRKGWKTCLICADTFRAGAFDQLKQNATKARIPFYGSYTEMDPVIIASEGVEKFKNENFEIIIVDTSGRHKQEDSLFEEMLQVSNAIQPDNIVYVMDASIGQACEAQAKAFKDKVDVASVIVTKLDGHAKGGGALSAVAATKSPIIFIGTGEHIDDFEPFKTQPFISKLLGMGDIEGLIDKVNELKLDDNEALIEKLKHGQFTLRDMYEQFQNIMKMGPFSQILGMIPGFGTDFMSKGNEQESMARLKKLMTIMDSMNDQELDSTDGAKVFSKQPGRIQRVARGSGVSTRDVQELLTQYTKFAQMVKKMGGIKGLFKGGDMSKNVSQSQMAKLNQQMAKMMDPRVLHHMGGMAGLQSMMRQFQQGAAGNMKGMMGFNNM</sequence>
<organism>
    <name type="scientific">Mus musculus</name>
    <name type="common">Mouse</name>
    <dbReference type="NCBI Taxonomy" id="10090"/>
    <lineage>
        <taxon>Eukaryota</taxon>
        <taxon>Metazoa</taxon>
        <taxon>Chordata</taxon>
        <taxon>Craniata</taxon>
        <taxon>Vertebrata</taxon>
        <taxon>Euteleostomi</taxon>
        <taxon>Mammalia</taxon>
        <taxon>Eutheria</taxon>
        <taxon>Euarchontoglires</taxon>
        <taxon>Glires</taxon>
        <taxon>Rodentia</taxon>
        <taxon>Myomorpha</taxon>
        <taxon>Muroidea</taxon>
        <taxon>Muridae</taxon>
        <taxon>Murinae</taxon>
        <taxon>Mus</taxon>
        <taxon>Mus</taxon>
    </lineage>
</organism>
<accession>P14576</accession>
<accession>Q3UWX8</accession>
<accession>Q9CWH7</accession>
<accession>Q9D008</accession>
<gene>
    <name type="primary">Srp54</name>
</gene>